<comment type="function">
    <text evidence="1">Allows the formation of correctly charged Asn-tRNA(Asn) or Gln-tRNA(Gln) through the transamidation of misacylated Asp-tRNA(Asn) or Glu-tRNA(Gln) in organisms which lack either or both of asparaginyl-tRNA or glutaminyl-tRNA synthetases. The reaction takes place in the presence of glutamine and ATP through an activated phospho-Asp-tRNA(Asn) or phospho-Glu-tRNA(Gln).</text>
</comment>
<comment type="catalytic activity">
    <reaction evidence="1">
        <text>L-glutamyl-tRNA(Gln) + L-glutamine + ATP + H2O = L-glutaminyl-tRNA(Gln) + L-glutamate + ADP + phosphate + H(+)</text>
        <dbReference type="Rhea" id="RHEA:17521"/>
        <dbReference type="Rhea" id="RHEA-COMP:9681"/>
        <dbReference type="Rhea" id="RHEA-COMP:9684"/>
        <dbReference type="ChEBI" id="CHEBI:15377"/>
        <dbReference type="ChEBI" id="CHEBI:15378"/>
        <dbReference type="ChEBI" id="CHEBI:29985"/>
        <dbReference type="ChEBI" id="CHEBI:30616"/>
        <dbReference type="ChEBI" id="CHEBI:43474"/>
        <dbReference type="ChEBI" id="CHEBI:58359"/>
        <dbReference type="ChEBI" id="CHEBI:78520"/>
        <dbReference type="ChEBI" id="CHEBI:78521"/>
        <dbReference type="ChEBI" id="CHEBI:456216"/>
    </reaction>
</comment>
<comment type="catalytic activity">
    <reaction evidence="1">
        <text>L-aspartyl-tRNA(Asn) + L-glutamine + ATP + H2O = L-asparaginyl-tRNA(Asn) + L-glutamate + ADP + phosphate + 2 H(+)</text>
        <dbReference type="Rhea" id="RHEA:14513"/>
        <dbReference type="Rhea" id="RHEA-COMP:9674"/>
        <dbReference type="Rhea" id="RHEA-COMP:9677"/>
        <dbReference type="ChEBI" id="CHEBI:15377"/>
        <dbReference type="ChEBI" id="CHEBI:15378"/>
        <dbReference type="ChEBI" id="CHEBI:29985"/>
        <dbReference type="ChEBI" id="CHEBI:30616"/>
        <dbReference type="ChEBI" id="CHEBI:43474"/>
        <dbReference type="ChEBI" id="CHEBI:58359"/>
        <dbReference type="ChEBI" id="CHEBI:78515"/>
        <dbReference type="ChEBI" id="CHEBI:78516"/>
        <dbReference type="ChEBI" id="CHEBI:456216"/>
    </reaction>
</comment>
<comment type="subunit">
    <text evidence="1">Heterotrimer of A, B and C subunits.</text>
</comment>
<comment type="similarity">
    <text evidence="1">Belongs to the GatC family.</text>
</comment>
<organism>
    <name type="scientific">Bacillus cereus (strain AH187)</name>
    <dbReference type="NCBI Taxonomy" id="405534"/>
    <lineage>
        <taxon>Bacteria</taxon>
        <taxon>Bacillati</taxon>
        <taxon>Bacillota</taxon>
        <taxon>Bacilli</taxon>
        <taxon>Bacillales</taxon>
        <taxon>Bacillaceae</taxon>
        <taxon>Bacillus</taxon>
        <taxon>Bacillus cereus group</taxon>
    </lineage>
</organism>
<sequence length="96" mass="10866">MSRISVENVKHVAHLARLAITDQEAEKFQKQLDAIVTFAEQLNELDTTDVKPTTHVLTMKNVMREDVPEKGLPVEEVLKNAPDHKDNQIRVPAVLE</sequence>
<feature type="chain" id="PRO_1000117629" description="Aspartyl/glutamyl-tRNA(Asn/Gln) amidotransferase subunit C">
    <location>
        <begin position="1"/>
        <end position="96"/>
    </location>
</feature>
<accession>B7HSX9</accession>
<name>GATC_BACC7</name>
<keyword id="KW-0067">ATP-binding</keyword>
<keyword id="KW-0436">Ligase</keyword>
<keyword id="KW-0547">Nucleotide-binding</keyword>
<keyword id="KW-0648">Protein biosynthesis</keyword>
<gene>
    <name evidence="1" type="primary">gatC</name>
    <name type="ordered locus">BCAH187_A0393</name>
</gene>
<proteinExistence type="inferred from homology"/>
<evidence type="ECO:0000255" key="1">
    <source>
        <dbReference type="HAMAP-Rule" id="MF_00122"/>
    </source>
</evidence>
<dbReference type="EC" id="6.3.5.-" evidence="1"/>
<dbReference type="EMBL" id="CP001177">
    <property type="protein sequence ID" value="ACJ80749.1"/>
    <property type="molecule type" value="Genomic_DNA"/>
</dbReference>
<dbReference type="SMR" id="B7HSX9"/>
<dbReference type="KEGG" id="bcr:BCAH187_A0393"/>
<dbReference type="HOGENOM" id="CLU_105899_6_1_9"/>
<dbReference type="Proteomes" id="UP000002214">
    <property type="component" value="Chromosome"/>
</dbReference>
<dbReference type="GO" id="GO:0050566">
    <property type="term" value="F:asparaginyl-tRNA synthase (glutamine-hydrolyzing) activity"/>
    <property type="evidence" value="ECO:0007669"/>
    <property type="project" value="RHEA"/>
</dbReference>
<dbReference type="GO" id="GO:0005524">
    <property type="term" value="F:ATP binding"/>
    <property type="evidence" value="ECO:0007669"/>
    <property type="project" value="UniProtKB-KW"/>
</dbReference>
<dbReference type="GO" id="GO:0050567">
    <property type="term" value="F:glutaminyl-tRNA synthase (glutamine-hydrolyzing) activity"/>
    <property type="evidence" value="ECO:0007669"/>
    <property type="project" value="UniProtKB-UniRule"/>
</dbReference>
<dbReference type="GO" id="GO:0070681">
    <property type="term" value="P:glutaminyl-tRNAGln biosynthesis via transamidation"/>
    <property type="evidence" value="ECO:0007669"/>
    <property type="project" value="TreeGrafter"/>
</dbReference>
<dbReference type="GO" id="GO:0006450">
    <property type="term" value="P:regulation of translational fidelity"/>
    <property type="evidence" value="ECO:0007669"/>
    <property type="project" value="InterPro"/>
</dbReference>
<dbReference type="GO" id="GO:0006412">
    <property type="term" value="P:translation"/>
    <property type="evidence" value="ECO:0007669"/>
    <property type="project" value="UniProtKB-UniRule"/>
</dbReference>
<dbReference type="Gene3D" id="1.10.20.60">
    <property type="entry name" value="Glu-tRNAGln amidotransferase C subunit, N-terminal domain"/>
    <property type="match status" value="1"/>
</dbReference>
<dbReference type="HAMAP" id="MF_00122">
    <property type="entry name" value="GatC"/>
    <property type="match status" value="1"/>
</dbReference>
<dbReference type="InterPro" id="IPR036113">
    <property type="entry name" value="Asp/Glu-ADT_sf_sub_c"/>
</dbReference>
<dbReference type="InterPro" id="IPR003837">
    <property type="entry name" value="GatC"/>
</dbReference>
<dbReference type="NCBIfam" id="TIGR00135">
    <property type="entry name" value="gatC"/>
    <property type="match status" value="1"/>
</dbReference>
<dbReference type="PANTHER" id="PTHR15004">
    <property type="entry name" value="GLUTAMYL-TRNA(GLN) AMIDOTRANSFERASE SUBUNIT C, MITOCHONDRIAL"/>
    <property type="match status" value="1"/>
</dbReference>
<dbReference type="PANTHER" id="PTHR15004:SF0">
    <property type="entry name" value="GLUTAMYL-TRNA(GLN) AMIDOTRANSFERASE SUBUNIT C, MITOCHONDRIAL"/>
    <property type="match status" value="1"/>
</dbReference>
<dbReference type="Pfam" id="PF02686">
    <property type="entry name" value="GatC"/>
    <property type="match status" value="1"/>
</dbReference>
<dbReference type="SUPFAM" id="SSF141000">
    <property type="entry name" value="Glu-tRNAGln amidotransferase C subunit"/>
    <property type="match status" value="1"/>
</dbReference>
<protein>
    <recommendedName>
        <fullName evidence="1">Aspartyl/glutamyl-tRNA(Asn/Gln) amidotransferase subunit C</fullName>
        <shortName evidence="1">Asp/Glu-ADT subunit C</shortName>
        <ecNumber evidence="1">6.3.5.-</ecNumber>
    </recommendedName>
</protein>
<reference key="1">
    <citation type="submission" date="2008-10" db="EMBL/GenBank/DDBJ databases">
        <title>Genome sequence of Bacillus cereus AH187.</title>
        <authorList>
            <person name="Dodson R.J."/>
            <person name="Durkin A.S."/>
            <person name="Rosovitz M.J."/>
            <person name="Rasko D.A."/>
            <person name="Kolsto A.B."/>
            <person name="Okstad O.A."/>
            <person name="Ravel J."/>
            <person name="Sutton G."/>
        </authorList>
    </citation>
    <scope>NUCLEOTIDE SEQUENCE [LARGE SCALE GENOMIC DNA]</scope>
    <source>
        <strain>AH187</strain>
    </source>
</reference>